<dbReference type="EC" id="5.3.1.1" evidence="1"/>
<dbReference type="EMBL" id="CP000238">
    <property type="protein sequence ID" value="ABF13817.1"/>
    <property type="molecule type" value="Genomic_DNA"/>
</dbReference>
<dbReference type="RefSeq" id="WP_011520363.1">
    <property type="nucleotide sequence ID" value="NC_007984.1"/>
</dbReference>
<dbReference type="SMR" id="Q1LTT4"/>
<dbReference type="STRING" id="374463.BCI_0169"/>
<dbReference type="KEGG" id="bci:BCI_0169"/>
<dbReference type="HOGENOM" id="CLU_024251_2_1_6"/>
<dbReference type="OrthoDB" id="9809429at2"/>
<dbReference type="UniPathway" id="UPA00109">
    <property type="reaction ID" value="UER00189"/>
</dbReference>
<dbReference type="UniPathway" id="UPA00138"/>
<dbReference type="Proteomes" id="UP000002427">
    <property type="component" value="Chromosome"/>
</dbReference>
<dbReference type="GO" id="GO:0005829">
    <property type="term" value="C:cytosol"/>
    <property type="evidence" value="ECO:0007669"/>
    <property type="project" value="TreeGrafter"/>
</dbReference>
<dbReference type="GO" id="GO:0004807">
    <property type="term" value="F:triose-phosphate isomerase activity"/>
    <property type="evidence" value="ECO:0007669"/>
    <property type="project" value="UniProtKB-UniRule"/>
</dbReference>
<dbReference type="GO" id="GO:0006094">
    <property type="term" value="P:gluconeogenesis"/>
    <property type="evidence" value="ECO:0007669"/>
    <property type="project" value="UniProtKB-UniRule"/>
</dbReference>
<dbReference type="GO" id="GO:0046166">
    <property type="term" value="P:glyceraldehyde-3-phosphate biosynthetic process"/>
    <property type="evidence" value="ECO:0007669"/>
    <property type="project" value="TreeGrafter"/>
</dbReference>
<dbReference type="GO" id="GO:0019563">
    <property type="term" value="P:glycerol catabolic process"/>
    <property type="evidence" value="ECO:0007669"/>
    <property type="project" value="TreeGrafter"/>
</dbReference>
<dbReference type="GO" id="GO:0006096">
    <property type="term" value="P:glycolytic process"/>
    <property type="evidence" value="ECO:0007669"/>
    <property type="project" value="UniProtKB-UniRule"/>
</dbReference>
<dbReference type="CDD" id="cd00311">
    <property type="entry name" value="TIM"/>
    <property type="match status" value="1"/>
</dbReference>
<dbReference type="FunFam" id="3.20.20.70:FF:000020">
    <property type="entry name" value="Triosephosphate isomerase"/>
    <property type="match status" value="1"/>
</dbReference>
<dbReference type="Gene3D" id="3.20.20.70">
    <property type="entry name" value="Aldolase class I"/>
    <property type="match status" value="1"/>
</dbReference>
<dbReference type="HAMAP" id="MF_00147_B">
    <property type="entry name" value="TIM_B"/>
    <property type="match status" value="1"/>
</dbReference>
<dbReference type="InterPro" id="IPR013785">
    <property type="entry name" value="Aldolase_TIM"/>
</dbReference>
<dbReference type="InterPro" id="IPR035990">
    <property type="entry name" value="TIM_sf"/>
</dbReference>
<dbReference type="InterPro" id="IPR022896">
    <property type="entry name" value="TrioseP_Isoase_bac/euk"/>
</dbReference>
<dbReference type="InterPro" id="IPR000652">
    <property type="entry name" value="Triosephosphate_isomerase"/>
</dbReference>
<dbReference type="NCBIfam" id="TIGR00419">
    <property type="entry name" value="tim"/>
    <property type="match status" value="1"/>
</dbReference>
<dbReference type="PANTHER" id="PTHR21139">
    <property type="entry name" value="TRIOSEPHOSPHATE ISOMERASE"/>
    <property type="match status" value="1"/>
</dbReference>
<dbReference type="PANTHER" id="PTHR21139:SF42">
    <property type="entry name" value="TRIOSEPHOSPHATE ISOMERASE"/>
    <property type="match status" value="1"/>
</dbReference>
<dbReference type="Pfam" id="PF00121">
    <property type="entry name" value="TIM"/>
    <property type="match status" value="1"/>
</dbReference>
<dbReference type="SUPFAM" id="SSF51351">
    <property type="entry name" value="Triosephosphate isomerase (TIM)"/>
    <property type="match status" value="1"/>
</dbReference>
<dbReference type="PROSITE" id="PS51440">
    <property type="entry name" value="TIM_2"/>
    <property type="match status" value="1"/>
</dbReference>
<accession>Q1LTT4</accession>
<gene>
    <name evidence="1" type="primary">tpiA</name>
    <name type="ordered locus">BCI_0169</name>
</gene>
<name>TPIS_BAUCH</name>
<keyword id="KW-0963">Cytoplasm</keyword>
<keyword id="KW-0312">Gluconeogenesis</keyword>
<keyword id="KW-0324">Glycolysis</keyword>
<keyword id="KW-0413">Isomerase</keyword>
<keyword id="KW-1185">Reference proteome</keyword>
<protein>
    <recommendedName>
        <fullName evidence="1">Triosephosphate isomerase</fullName>
        <shortName evidence="1">TIM</shortName>
        <shortName evidence="1">TPI</shortName>
        <ecNumber evidence="1">5.3.1.1</ecNumber>
    </recommendedName>
    <alternativeName>
        <fullName evidence="1">Triose-phosphate isomerase</fullName>
    </alternativeName>
</protein>
<sequence>MRHPLVIGNWKLNGSKHMVSNFIISLRNQLSNMINCCNVAIAPPMIYLDRAKSYLTGSHIALGAQNVDLHVSGAFTGEISAKMLKDIGAKYIIIGHIERRLYHKESNEDIANKFACLKNEGLIPVLCIGETKEENEKDQTKAICVRQLDYILNIVGTQAFKNAVIAYEPIWAIATGKSANPLQIQKIHKFIRSYLFNHDQAIAEQVIIQYGGSVNASNAAELFNQPDVDGALVGGASLKADIFATIIKAAARAKKN</sequence>
<reference key="1">
    <citation type="journal article" date="2006" name="PLoS Biol.">
        <title>Metabolic complementarity and genomics of the dual bacterial symbiosis of sharpshooters.</title>
        <authorList>
            <person name="Wu D."/>
            <person name="Daugherty S.C."/>
            <person name="Van Aken S.E."/>
            <person name="Pai G.H."/>
            <person name="Watkins K.L."/>
            <person name="Khouri H."/>
            <person name="Tallon L.J."/>
            <person name="Zaborsky J.M."/>
            <person name="Dunbar H.E."/>
            <person name="Tran P.L."/>
            <person name="Moran N.A."/>
            <person name="Eisen J.A."/>
        </authorList>
    </citation>
    <scope>NUCLEOTIDE SEQUENCE [LARGE SCALE GENOMIC DNA]</scope>
</reference>
<evidence type="ECO:0000255" key="1">
    <source>
        <dbReference type="HAMAP-Rule" id="MF_00147"/>
    </source>
</evidence>
<organism>
    <name type="scientific">Baumannia cicadellinicola subsp. Homalodisca coagulata</name>
    <dbReference type="NCBI Taxonomy" id="374463"/>
    <lineage>
        <taxon>Bacteria</taxon>
        <taxon>Pseudomonadati</taxon>
        <taxon>Pseudomonadota</taxon>
        <taxon>Gammaproteobacteria</taxon>
        <taxon>Candidatus Palibaumannia</taxon>
    </lineage>
</organism>
<proteinExistence type="inferred from homology"/>
<feature type="chain" id="PRO_0000307435" description="Triosephosphate isomerase">
    <location>
        <begin position="1"/>
        <end position="256"/>
    </location>
</feature>
<feature type="active site" description="Electrophile" evidence="1">
    <location>
        <position position="96"/>
    </location>
</feature>
<feature type="active site" description="Proton acceptor" evidence="1">
    <location>
        <position position="168"/>
    </location>
</feature>
<feature type="binding site" evidence="1">
    <location>
        <begin position="9"/>
        <end position="11"/>
    </location>
    <ligand>
        <name>substrate</name>
    </ligand>
</feature>
<feature type="binding site" evidence="1">
    <location>
        <position position="213"/>
    </location>
    <ligand>
        <name>substrate</name>
    </ligand>
</feature>
<feature type="binding site" evidence="1">
    <location>
        <begin position="234"/>
        <end position="235"/>
    </location>
    <ligand>
        <name>substrate</name>
    </ligand>
</feature>
<comment type="function">
    <text evidence="1">Involved in the gluconeogenesis. Catalyzes stereospecifically the conversion of dihydroxyacetone phosphate (DHAP) to D-glyceraldehyde-3-phosphate (G3P).</text>
</comment>
<comment type="catalytic activity">
    <reaction evidence="1">
        <text>D-glyceraldehyde 3-phosphate = dihydroxyacetone phosphate</text>
        <dbReference type="Rhea" id="RHEA:18585"/>
        <dbReference type="ChEBI" id="CHEBI:57642"/>
        <dbReference type="ChEBI" id="CHEBI:59776"/>
        <dbReference type="EC" id="5.3.1.1"/>
    </reaction>
</comment>
<comment type="pathway">
    <text evidence="1">Carbohydrate biosynthesis; gluconeogenesis.</text>
</comment>
<comment type="pathway">
    <text evidence="1">Carbohydrate degradation; glycolysis; D-glyceraldehyde 3-phosphate from glycerone phosphate: step 1/1.</text>
</comment>
<comment type="subunit">
    <text evidence="1">Homodimer.</text>
</comment>
<comment type="subcellular location">
    <subcellularLocation>
        <location evidence="1">Cytoplasm</location>
    </subcellularLocation>
</comment>
<comment type="similarity">
    <text evidence="1">Belongs to the triosephosphate isomerase family.</text>
</comment>